<protein>
    <recommendedName>
        <fullName>Guanosine-3',5'-bis(diphosphate) 3'-pyrophosphohydrolase</fullName>
        <ecNumber>3.1.7.2</ecNumber>
    </recommendedName>
    <alternativeName>
        <fullName>Penta-phosphate guanosine-3'-pyrophosphohydrolase</fullName>
        <shortName>(ppGpp)ase</shortName>
    </alternativeName>
</protein>
<accession>O67012</accession>
<organism>
    <name type="scientific">Aquifex aeolicus (strain VF5)</name>
    <dbReference type="NCBI Taxonomy" id="224324"/>
    <lineage>
        <taxon>Bacteria</taxon>
        <taxon>Pseudomonadati</taxon>
        <taxon>Aquificota</taxon>
        <taxon>Aquificia</taxon>
        <taxon>Aquificales</taxon>
        <taxon>Aquificaceae</taxon>
        <taxon>Aquifex</taxon>
    </lineage>
</organism>
<name>SPOT_AQUAE</name>
<dbReference type="EC" id="3.1.7.2"/>
<dbReference type="EMBL" id="AE000657">
    <property type="protein sequence ID" value="AAC06975.1"/>
    <property type="molecule type" value="Genomic_DNA"/>
</dbReference>
<dbReference type="PIR" id="A70373">
    <property type="entry name" value="A70373"/>
</dbReference>
<dbReference type="RefSeq" id="NP_213573.1">
    <property type="nucleotide sequence ID" value="NC_000918.1"/>
</dbReference>
<dbReference type="RefSeq" id="WP_010880511.1">
    <property type="nucleotide sequence ID" value="NC_000918.1"/>
</dbReference>
<dbReference type="SMR" id="O67012"/>
<dbReference type="FunCoup" id="O67012">
    <property type="interactions" value="447"/>
</dbReference>
<dbReference type="STRING" id="224324.aq_844"/>
<dbReference type="EnsemblBacteria" id="AAC06975">
    <property type="protein sequence ID" value="AAC06975"/>
    <property type="gene ID" value="aq_844"/>
</dbReference>
<dbReference type="KEGG" id="aae:aq_844"/>
<dbReference type="PATRIC" id="fig|224324.8.peg.658"/>
<dbReference type="eggNOG" id="COG0317">
    <property type="taxonomic scope" value="Bacteria"/>
</dbReference>
<dbReference type="HOGENOM" id="CLU_012300_3_0_0"/>
<dbReference type="InParanoid" id="O67012"/>
<dbReference type="OrthoDB" id="9805041at2"/>
<dbReference type="UniPathway" id="UPA00908">
    <property type="reaction ID" value="UER00886"/>
</dbReference>
<dbReference type="Proteomes" id="UP000000798">
    <property type="component" value="Chromosome"/>
</dbReference>
<dbReference type="GO" id="GO:0008893">
    <property type="term" value="F:guanosine-3',5'-bis(diphosphate) 3'-diphosphatase activity"/>
    <property type="evidence" value="ECO:0007669"/>
    <property type="project" value="UniProtKB-EC"/>
</dbReference>
<dbReference type="GO" id="GO:0015970">
    <property type="term" value="P:guanosine tetraphosphate biosynthetic process"/>
    <property type="evidence" value="ECO:0007669"/>
    <property type="project" value="UniProtKB-UniPathway"/>
</dbReference>
<dbReference type="CDD" id="cd04876">
    <property type="entry name" value="ACT_RelA-SpoT"/>
    <property type="match status" value="1"/>
</dbReference>
<dbReference type="CDD" id="cd00077">
    <property type="entry name" value="HDc"/>
    <property type="match status" value="1"/>
</dbReference>
<dbReference type="CDD" id="cd05399">
    <property type="entry name" value="NT_Rel-Spo_like"/>
    <property type="match status" value="1"/>
</dbReference>
<dbReference type="CDD" id="cd01668">
    <property type="entry name" value="TGS_RSH"/>
    <property type="match status" value="1"/>
</dbReference>
<dbReference type="FunFam" id="3.10.20.30:FF:000002">
    <property type="entry name" value="GTP pyrophosphokinase (RelA/SpoT)"/>
    <property type="match status" value="1"/>
</dbReference>
<dbReference type="FunFam" id="1.10.3210.10:FF:000001">
    <property type="entry name" value="GTP pyrophosphokinase RelA"/>
    <property type="match status" value="1"/>
</dbReference>
<dbReference type="FunFam" id="3.30.460.10:FF:000001">
    <property type="entry name" value="GTP pyrophosphokinase RelA"/>
    <property type="match status" value="1"/>
</dbReference>
<dbReference type="Gene3D" id="3.10.20.30">
    <property type="match status" value="1"/>
</dbReference>
<dbReference type="Gene3D" id="3.30.70.260">
    <property type="match status" value="1"/>
</dbReference>
<dbReference type="Gene3D" id="3.30.460.10">
    <property type="entry name" value="Beta Polymerase, domain 2"/>
    <property type="match status" value="1"/>
</dbReference>
<dbReference type="Gene3D" id="1.10.3210.10">
    <property type="entry name" value="Hypothetical protein af1432"/>
    <property type="match status" value="1"/>
</dbReference>
<dbReference type="InterPro" id="IPR045865">
    <property type="entry name" value="ACT-like_dom_sf"/>
</dbReference>
<dbReference type="InterPro" id="IPR002912">
    <property type="entry name" value="ACT_dom"/>
</dbReference>
<dbReference type="InterPro" id="IPR012675">
    <property type="entry name" value="Beta-grasp_dom_sf"/>
</dbReference>
<dbReference type="InterPro" id="IPR003607">
    <property type="entry name" value="HD/PDEase_dom"/>
</dbReference>
<dbReference type="InterPro" id="IPR006674">
    <property type="entry name" value="HD_domain"/>
</dbReference>
<dbReference type="InterPro" id="IPR043519">
    <property type="entry name" value="NT_sf"/>
</dbReference>
<dbReference type="InterPro" id="IPR004811">
    <property type="entry name" value="RelA/Spo_fam"/>
</dbReference>
<dbReference type="InterPro" id="IPR045600">
    <property type="entry name" value="RelA/SpoT_AH_RIS"/>
</dbReference>
<dbReference type="InterPro" id="IPR007685">
    <property type="entry name" value="RelA_SpoT"/>
</dbReference>
<dbReference type="InterPro" id="IPR004095">
    <property type="entry name" value="TGS"/>
</dbReference>
<dbReference type="InterPro" id="IPR012676">
    <property type="entry name" value="TGS-like"/>
</dbReference>
<dbReference type="InterPro" id="IPR033655">
    <property type="entry name" value="TGS_RelA/SpoT"/>
</dbReference>
<dbReference type="NCBIfam" id="TIGR00691">
    <property type="entry name" value="spoT_relA"/>
    <property type="match status" value="1"/>
</dbReference>
<dbReference type="PANTHER" id="PTHR21262:SF31">
    <property type="entry name" value="GTP PYROPHOSPHOKINASE"/>
    <property type="match status" value="1"/>
</dbReference>
<dbReference type="PANTHER" id="PTHR21262">
    <property type="entry name" value="GUANOSINE-3',5'-BIS DIPHOSPHATE 3'-PYROPHOSPHOHYDROLASE"/>
    <property type="match status" value="1"/>
</dbReference>
<dbReference type="Pfam" id="PF13291">
    <property type="entry name" value="ACT_4"/>
    <property type="match status" value="1"/>
</dbReference>
<dbReference type="Pfam" id="PF13328">
    <property type="entry name" value="HD_4"/>
    <property type="match status" value="1"/>
</dbReference>
<dbReference type="Pfam" id="PF19296">
    <property type="entry name" value="RelA_AH_RIS"/>
    <property type="match status" value="1"/>
</dbReference>
<dbReference type="Pfam" id="PF04607">
    <property type="entry name" value="RelA_SpoT"/>
    <property type="match status" value="1"/>
</dbReference>
<dbReference type="Pfam" id="PF02824">
    <property type="entry name" value="TGS"/>
    <property type="match status" value="1"/>
</dbReference>
<dbReference type="SMART" id="SM00471">
    <property type="entry name" value="HDc"/>
    <property type="match status" value="1"/>
</dbReference>
<dbReference type="SMART" id="SM00954">
    <property type="entry name" value="RelA_SpoT"/>
    <property type="match status" value="1"/>
</dbReference>
<dbReference type="SUPFAM" id="SSF55021">
    <property type="entry name" value="ACT-like"/>
    <property type="match status" value="1"/>
</dbReference>
<dbReference type="SUPFAM" id="SSF109604">
    <property type="entry name" value="HD-domain/PDEase-like"/>
    <property type="match status" value="1"/>
</dbReference>
<dbReference type="SUPFAM" id="SSF81301">
    <property type="entry name" value="Nucleotidyltransferase"/>
    <property type="match status" value="1"/>
</dbReference>
<dbReference type="SUPFAM" id="SSF81271">
    <property type="entry name" value="TGS-like"/>
    <property type="match status" value="1"/>
</dbReference>
<dbReference type="PROSITE" id="PS51671">
    <property type="entry name" value="ACT"/>
    <property type="match status" value="1"/>
</dbReference>
<dbReference type="PROSITE" id="PS51831">
    <property type="entry name" value="HD"/>
    <property type="match status" value="1"/>
</dbReference>
<dbReference type="PROSITE" id="PS51880">
    <property type="entry name" value="TGS"/>
    <property type="match status" value="1"/>
</dbReference>
<gene>
    <name type="primary">spoT</name>
    <name type="ordered locus">aq_844</name>
</gene>
<keyword id="KW-0378">Hydrolase</keyword>
<keyword id="KW-0464">Manganese</keyword>
<keyword id="KW-1185">Reference proteome</keyword>
<evidence type="ECO:0000250" key="1"/>
<evidence type="ECO:0000255" key="2">
    <source>
        <dbReference type="PROSITE-ProRule" id="PRU01007"/>
    </source>
</evidence>
<evidence type="ECO:0000255" key="3">
    <source>
        <dbReference type="PROSITE-ProRule" id="PRU01175"/>
    </source>
</evidence>
<evidence type="ECO:0000255" key="4">
    <source>
        <dbReference type="PROSITE-ProRule" id="PRU01228"/>
    </source>
</evidence>
<evidence type="ECO:0000305" key="5"/>
<reference key="1">
    <citation type="journal article" date="1998" name="Nature">
        <title>The complete genome of the hyperthermophilic bacterium Aquifex aeolicus.</title>
        <authorList>
            <person name="Deckert G."/>
            <person name="Warren P.V."/>
            <person name="Gaasterland T."/>
            <person name="Young W.G."/>
            <person name="Lenox A.L."/>
            <person name="Graham D.E."/>
            <person name="Overbeek R."/>
            <person name="Snead M.A."/>
            <person name="Keller M."/>
            <person name="Aujay M."/>
            <person name="Huber R."/>
            <person name="Feldman R.A."/>
            <person name="Short J.M."/>
            <person name="Olsen G.J."/>
            <person name="Swanson R.V."/>
        </authorList>
    </citation>
    <scope>NUCLEOTIDE SEQUENCE [LARGE SCALE GENOMIC DNA]</scope>
    <source>
        <strain>VF5</strain>
    </source>
</reference>
<sequence length="696" mass="80570">MSKLGEVSLEEDLEKLLSHYPQHAEEIQRAYEFAKEKHGEQKRKTGEPYIIHPLNVALKLAELGMDHETIIAALLHDTLEDTDTTYEEIKERFGERVAKLVEGVTKIGKIKYKSEQAENYRKLILATAEDPRVILLKLSDRLDNVKTLWVFREEKRKKIAKETMEIYAPLAHRLGVWSIKNELEDWAFKYLYPEEYEKVRNFVKESRKNLEEYLRKYVIPKVRKELEKYGIEAEIKYRSKHYYSIWEKTRRKGIRLEDVHDILGVRIIVNTVPECYTVLGIIHSLFRPVPGKFKDYISLPKPNLYQSLHTTVIADKGKLVEFQIRTWEMHERAEKGIASHWAYKEGKNPSDAGVYSWLRELVESIQGSTNPSEVLENLKSNLFFEEVFVFTPKGDLVVLPKGSTPVDLAYKIHTEVGNHCAGAKSNGRIVPLNYELKSGDVVEIITNPNKSPSYEWLSFVKTSRARNKIKQFLKKQERERYLSEGKRILERIREKLGLSHEDLINKIRERVRFDTEEELLLALGKRKISSANLIKLIFPKKKEEKEERRGSSTVFLEDLSNIKHEVAKCCKPIPGDEILGVITRTKGLVLHEKSCSNLKNVLRLNPEKVKEVQLQASGYFQTDIRVVASDRIGLLSDITKVISESGSNIVSSMTNTREGKAVMDFTVEVKNKEHLEKIMKKIKSVEGVKICKRLYH</sequence>
<proteinExistence type="inferred from homology"/>
<feature type="chain" id="PRO_0000166567" description="Guanosine-3',5'-bis(diphosphate) 3'-pyrophosphohydrolase">
    <location>
        <begin position="1"/>
        <end position="696"/>
    </location>
</feature>
<feature type="domain" description="HD" evidence="3">
    <location>
        <begin position="49"/>
        <end position="145"/>
    </location>
</feature>
<feature type="domain" description="TGS" evidence="4">
    <location>
        <begin position="383"/>
        <end position="446"/>
    </location>
</feature>
<feature type="domain" description="ACT" evidence="2">
    <location>
        <begin position="623"/>
        <end position="696"/>
    </location>
</feature>
<comment type="function">
    <text evidence="1">In eubacteria ppGpp (guanosine 3'-diphosphate 5'-diphosphate) is a mediator of the stringent response that coordinates a variety of cellular activities in response to changes in nutritional abundance. This enzyme catalyzes the degradation of ppGpp into GDP. It may also be capable of catalyzing the synthesis of ppGpp (By similarity).</text>
</comment>
<comment type="catalytic activity">
    <reaction>
        <text>guanosine 3',5'-bis(diphosphate) + H2O = GDP + diphosphate + H(+)</text>
        <dbReference type="Rhea" id="RHEA:14253"/>
        <dbReference type="ChEBI" id="CHEBI:15377"/>
        <dbReference type="ChEBI" id="CHEBI:15378"/>
        <dbReference type="ChEBI" id="CHEBI:33019"/>
        <dbReference type="ChEBI" id="CHEBI:58189"/>
        <dbReference type="ChEBI" id="CHEBI:77828"/>
        <dbReference type="EC" id="3.1.7.2"/>
    </reaction>
</comment>
<comment type="cofactor">
    <cofactor evidence="1">
        <name>Mn(2+)</name>
        <dbReference type="ChEBI" id="CHEBI:29035"/>
    </cofactor>
</comment>
<comment type="pathway">
    <text>Purine metabolism; ppGpp biosynthesis; ppGpp from GDP: step 1/1.</text>
</comment>
<comment type="similarity">
    <text evidence="5">Belongs to the RelA/SpoT family.</text>
</comment>